<reference key="1">
    <citation type="submission" date="2005-08" db="EMBL/GenBank/DDBJ databases">
        <title>Complete sequence of Pelodictyon luteolum DSM 273.</title>
        <authorList>
            <consortium name="US DOE Joint Genome Institute"/>
            <person name="Copeland A."/>
            <person name="Lucas S."/>
            <person name="Lapidus A."/>
            <person name="Barry K."/>
            <person name="Detter J.C."/>
            <person name="Glavina T."/>
            <person name="Hammon N."/>
            <person name="Israni S."/>
            <person name="Pitluck S."/>
            <person name="Bryant D."/>
            <person name="Schmutz J."/>
            <person name="Larimer F."/>
            <person name="Land M."/>
            <person name="Kyrpides N."/>
            <person name="Ivanova N."/>
            <person name="Richardson P."/>
        </authorList>
    </citation>
    <scope>NUCLEOTIDE SEQUENCE [LARGE SCALE GENOMIC DNA]</scope>
    <source>
        <strain>DSM 273 / BCRC 81028 / 2530</strain>
    </source>
</reference>
<protein>
    <recommendedName>
        <fullName evidence="1">Lysine--tRNA ligase</fullName>
        <ecNumber evidence="1">6.1.1.6</ecNumber>
    </recommendedName>
    <alternativeName>
        <fullName evidence="1">Lysyl-tRNA synthetase</fullName>
        <shortName evidence="1">LysRS</shortName>
    </alternativeName>
</protein>
<comment type="catalytic activity">
    <reaction evidence="1">
        <text>tRNA(Lys) + L-lysine + ATP = L-lysyl-tRNA(Lys) + AMP + diphosphate</text>
        <dbReference type="Rhea" id="RHEA:20792"/>
        <dbReference type="Rhea" id="RHEA-COMP:9696"/>
        <dbReference type="Rhea" id="RHEA-COMP:9697"/>
        <dbReference type="ChEBI" id="CHEBI:30616"/>
        <dbReference type="ChEBI" id="CHEBI:32551"/>
        <dbReference type="ChEBI" id="CHEBI:33019"/>
        <dbReference type="ChEBI" id="CHEBI:78442"/>
        <dbReference type="ChEBI" id="CHEBI:78529"/>
        <dbReference type="ChEBI" id="CHEBI:456215"/>
        <dbReference type="EC" id="6.1.1.6"/>
    </reaction>
</comment>
<comment type="cofactor">
    <cofactor evidence="1">
        <name>Mg(2+)</name>
        <dbReference type="ChEBI" id="CHEBI:18420"/>
    </cofactor>
    <text evidence="1">Binds 3 Mg(2+) ions per subunit.</text>
</comment>
<comment type="subunit">
    <text evidence="1">Homodimer.</text>
</comment>
<comment type="subcellular location">
    <subcellularLocation>
        <location evidence="1">Cytoplasm</location>
    </subcellularLocation>
</comment>
<comment type="similarity">
    <text evidence="1">Belongs to the class-II aminoacyl-tRNA synthetase family.</text>
</comment>
<accession>Q3B365</accession>
<dbReference type="EC" id="6.1.1.6" evidence="1"/>
<dbReference type="EMBL" id="CP000096">
    <property type="protein sequence ID" value="ABB24216.1"/>
    <property type="molecule type" value="Genomic_DNA"/>
</dbReference>
<dbReference type="RefSeq" id="WP_011358088.1">
    <property type="nucleotide sequence ID" value="NC_007512.1"/>
</dbReference>
<dbReference type="SMR" id="Q3B365"/>
<dbReference type="STRING" id="319225.Plut_1357"/>
<dbReference type="KEGG" id="plt:Plut_1357"/>
<dbReference type="eggNOG" id="COG1190">
    <property type="taxonomic scope" value="Bacteria"/>
</dbReference>
<dbReference type="HOGENOM" id="CLU_008255_6_0_10"/>
<dbReference type="OrthoDB" id="9801152at2"/>
<dbReference type="Proteomes" id="UP000002709">
    <property type="component" value="Chromosome"/>
</dbReference>
<dbReference type="GO" id="GO:0005829">
    <property type="term" value="C:cytosol"/>
    <property type="evidence" value="ECO:0007669"/>
    <property type="project" value="TreeGrafter"/>
</dbReference>
<dbReference type="GO" id="GO:0005524">
    <property type="term" value="F:ATP binding"/>
    <property type="evidence" value="ECO:0007669"/>
    <property type="project" value="UniProtKB-UniRule"/>
</dbReference>
<dbReference type="GO" id="GO:0004824">
    <property type="term" value="F:lysine-tRNA ligase activity"/>
    <property type="evidence" value="ECO:0007669"/>
    <property type="project" value="UniProtKB-UniRule"/>
</dbReference>
<dbReference type="GO" id="GO:0000287">
    <property type="term" value="F:magnesium ion binding"/>
    <property type="evidence" value="ECO:0007669"/>
    <property type="project" value="UniProtKB-UniRule"/>
</dbReference>
<dbReference type="GO" id="GO:0000049">
    <property type="term" value="F:tRNA binding"/>
    <property type="evidence" value="ECO:0007669"/>
    <property type="project" value="TreeGrafter"/>
</dbReference>
<dbReference type="GO" id="GO:0006430">
    <property type="term" value="P:lysyl-tRNA aminoacylation"/>
    <property type="evidence" value="ECO:0007669"/>
    <property type="project" value="UniProtKB-UniRule"/>
</dbReference>
<dbReference type="CDD" id="cd00775">
    <property type="entry name" value="LysRS_core"/>
    <property type="match status" value="1"/>
</dbReference>
<dbReference type="CDD" id="cd04322">
    <property type="entry name" value="LysRS_N"/>
    <property type="match status" value="1"/>
</dbReference>
<dbReference type="FunFam" id="2.40.50.140:FF:000024">
    <property type="entry name" value="Lysine--tRNA ligase"/>
    <property type="match status" value="1"/>
</dbReference>
<dbReference type="Gene3D" id="3.30.930.10">
    <property type="entry name" value="Bira Bifunctional Protein, Domain 2"/>
    <property type="match status" value="1"/>
</dbReference>
<dbReference type="Gene3D" id="2.40.50.140">
    <property type="entry name" value="Nucleic acid-binding proteins"/>
    <property type="match status" value="1"/>
</dbReference>
<dbReference type="HAMAP" id="MF_00252">
    <property type="entry name" value="Lys_tRNA_synth_class2"/>
    <property type="match status" value="1"/>
</dbReference>
<dbReference type="InterPro" id="IPR004364">
    <property type="entry name" value="Aa-tRNA-synt_II"/>
</dbReference>
<dbReference type="InterPro" id="IPR006195">
    <property type="entry name" value="aa-tRNA-synth_II"/>
</dbReference>
<dbReference type="InterPro" id="IPR045864">
    <property type="entry name" value="aa-tRNA-synth_II/BPL/LPL"/>
</dbReference>
<dbReference type="InterPro" id="IPR002313">
    <property type="entry name" value="Lys-tRNA-ligase_II"/>
</dbReference>
<dbReference type="InterPro" id="IPR044136">
    <property type="entry name" value="Lys-tRNA-ligase_II_N"/>
</dbReference>
<dbReference type="InterPro" id="IPR018149">
    <property type="entry name" value="Lys-tRNA-synth_II_C"/>
</dbReference>
<dbReference type="InterPro" id="IPR012340">
    <property type="entry name" value="NA-bd_OB-fold"/>
</dbReference>
<dbReference type="InterPro" id="IPR004365">
    <property type="entry name" value="NA-bd_OB_tRNA"/>
</dbReference>
<dbReference type="NCBIfam" id="TIGR00499">
    <property type="entry name" value="lysS_bact"/>
    <property type="match status" value="1"/>
</dbReference>
<dbReference type="NCBIfam" id="NF001756">
    <property type="entry name" value="PRK00484.1"/>
    <property type="match status" value="1"/>
</dbReference>
<dbReference type="PANTHER" id="PTHR42918:SF15">
    <property type="entry name" value="LYSINE--TRNA LIGASE, CHLOROPLASTIC_MITOCHONDRIAL"/>
    <property type="match status" value="1"/>
</dbReference>
<dbReference type="PANTHER" id="PTHR42918">
    <property type="entry name" value="LYSYL-TRNA SYNTHETASE"/>
    <property type="match status" value="1"/>
</dbReference>
<dbReference type="Pfam" id="PF00152">
    <property type="entry name" value="tRNA-synt_2"/>
    <property type="match status" value="1"/>
</dbReference>
<dbReference type="Pfam" id="PF01336">
    <property type="entry name" value="tRNA_anti-codon"/>
    <property type="match status" value="1"/>
</dbReference>
<dbReference type="PRINTS" id="PR00982">
    <property type="entry name" value="TRNASYNTHLYS"/>
</dbReference>
<dbReference type="SUPFAM" id="SSF55681">
    <property type="entry name" value="Class II aaRS and biotin synthetases"/>
    <property type="match status" value="1"/>
</dbReference>
<dbReference type="SUPFAM" id="SSF50249">
    <property type="entry name" value="Nucleic acid-binding proteins"/>
    <property type="match status" value="1"/>
</dbReference>
<dbReference type="PROSITE" id="PS50862">
    <property type="entry name" value="AA_TRNA_LIGASE_II"/>
    <property type="match status" value="1"/>
</dbReference>
<feature type="chain" id="PRO_1000125523" description="Lysine--tRNA ligase">
    <location>
        <begin position="1"/>
        <end position="501"/>
    </location>
</feature>
<feature type="binding site" evidence="1">
    <location>
        <position position="412"/>
    </location>
    <ligand>
        <name>Mg(2+)</name>
        <dbReference type="ChEBI" id="CHEBI:18420"/>
        <label>1</label>
    </ligand>
</feature>
<feature type="binding site" evidence="1">
    <location>
        <position position="419"/>
    </location>
    <ligand>
        <name>Mg(2+)</name>
        <dbReference type="ChEBI" id="CHEBI:18420"/>
        <label>1</label>
    </ligand>
</feature>
<feature type="binding site" evidence="1">
    <location>
        <position position="419"/>
    </location>
    <ligand>
        <name>Mg(2+)</name>
        <dbReference type="ChEBI" id="CHEBI:18420"/>
        <label>2</label>
    </ligand>
</feature>
<gene>
    <name evidence="1" type="primary">lysS</name>
    <name type="ordered locus">Plut_1357</name>
</gene>
<evidence type="ECO:0000255" key="1">
    <source>
        <dbReference type="HAMAP-Rule" id="MF_00252"/>
    </source>
</evidence>
<proteinExistence type="inferred from homology"/>
<name>SYK_CHLL3</name>
<sequence>MHQDNEQLSLNDQMQRRFDERRHLQESGINPYPCSFEVTGHSRQIIEHFKEDAEEKVSVAGRIMAIRRMGKASFFHIQDSDGRMQIYLKKDEVGDDAYATFKLLDIGDIVGVNGYTFRTRTGEISVHAESFELLCKSLRPIPVAKEKEVEGEKVVFDAFADRELRYRQRYVDLIVNPEVRSTFIKRSAIVSHIRSFFTSQGWLEVETPILQPIYGGAAARPFTTHHNALDMQLYLRIANELYLKRLIVGGFDGVFEFAKDFRNEGIDRFHNPEFTQVELYVAYKDYDWMMRLVEELFQQTAIAVNGTAMTTFLGHEISLEAPFRRLTIADSIREYTGAEIEGKTETELRNLAKDLGLELDPKIGSGKIIDEIFGEFVEPKLIQPTFITDYPTEMSPLAKPHRSKPGLVERFELIAGGKEICNSFSELNDPVIQRQRLEEQASLRQRGDDEAMVVDEDFLRALEYGMPPTAGLGIGIDRLVMLITGEESIRDVIFFPHLKPE</sequence>
<organism>
    <name type="scientific">Chlorobium luteolum (strain DSM 273 / BCRC 81028 / 2530)</name>
    <name type="common">Pelodictyon luteolum</name>
    <dbReference type="NCBI Taxonomy" id="319225"/>
    <lineage>
        <taxon>Bacteria</taxon>
        <taxon>Pseudomonadati</taxon>
        <taxon>Chlorobiota</taxon>
        <taxon>Chlorobiia</taxon>
        <taxon>Chlorobiales</taxon>
        <taxon>Chlorobiaceae</taxon>
        <taxon>Chlorobium/Pelodictyon group</taxon>
        <taxon>Pelodictyon</taxon>
    </lineage>
</organism>
<keyword id="KW-0030">Aminoacyl-tRNA synthetase</keyword>
<keyword id="KW-0067">ATP-binding</keyword>
<keyword id="KW-0963">Cytoplasm</keyword>
<keyword id="KW-0436">Ligase</keyword>
<keyword id="KW-0460">Magnesium</keyword>
<keyword id="KW-0479">Metal-binding</keyword>
<keyword id="KW-0547">Nucleotide-binding</keyword>
<keyword id="KW-0648">Protein biosynthesis</keyword>
<keyword id="KW-1185">Reference proteome</keyword>